<gene>
    <name type="primary">rps2</name>
</gene>
<name>RR2_BUXMI</name>
<proteinExistence type="inferred from homology"/>
<dbReference type="EMBL" id="EF380351">
    <property type="protein sequence ID" value="ABQ45238.1"/>
    <property type="molecule type" value="Genomic_DNA"/>
</dbReference>
<dbReference type="RefSeq" id="YP_001294173.1">
    <property type="nucleotide sequence ID" value="NC_009599.1"/>
</dbReference>
<dbReference type="SMR" id="A6MM25"/>
<dbReference type="GeneID" id="5236946"/>
<dbReference type="GO" id="GO:0009507">
    <property type="term" value="C:chloroplast"/>
    <property type="evidence" value="ECO:0007669"/>
    <property type="project" value="UniProtKB-SubCell"/>
</dbReference>
<dbReference type="GO" id="GO:0005763">
    <property type="term" value="C:mitochondrial small ribosomal subunit"/>
    <property type="evidence" value="ECO:0007669"/>
    <property type="project" value="TreeGrafter"/>
</dbReference>
<dbReference type="GO" id="GO:0003735">
    <property type="term" value="F:structural constituent of ribosome"/>
    <property type="evidence" value="ECO:0007669"/>
    <property type="project" value="InterPro"/>
</dbReference>
<dbReference type="GO" id="GO:0006412">
    <property type="term" value="P:translation"/>
    <property type="evidence" value="ECO:0007669"/>
    <property type="project" value="UniProtKB-UniRule"/>
</dbReference>
<dbReference type="CDD" id="cd01425">
    <property type="entry name" value="RPS2"/>
    <property type="match status" value="1"/>
</dbReference>
<dbReference type="FunFam" id="3.40.50.10490:FF:000101">
    <property type="match status" value="1"/>
</dbReference>
<dbReference type="FunFam" id="1.10.287.610:FF:000001">
    <property type="entry name" value="30S ribosomal protein S2"/>
    <property type="match status" value="1"/>
</dbReference>
<dbReference type="Gene3D" id="3.40.50.10490">
    <property type="entry name" value="Glucose-6-phosphate isomerase like protein, domain 1"/>
    <property type="match status" value="1"/>
</dbReference>
<dbReference type="Gene3D" id="1.10.287.610">
    <property type="entry name" value="Helix hairpin bin"/>
    <property type="match status" value="1"/>
</dbReference>
<dbReference type="HAMAP" id="MF_00291_B">
    <property type="entry name" value="Ribosomal_uS2_B"/>
    <property type="match status" value="1"/>
</dbReference>
<dbReference type="InterPro" id="IPR001865">
    <property type="entry name" value="Ribosomal_uS2"/>
</dbReference>
<dbReference type="InterPro" id="IPR005706">
    <property type="entry name" value="Ribosomal_uS2_bac/mit/plastid"/>
</dbReference>
<dbReference type="InterPro" id="IPR018130">
    <property type="entry name" value="Ribosomal_uS2_CS"/>
</dbReference>
<dbReference type="InterPro" id="IPR023591">
    <property type="entry name" value="Ribosomal_uS2_flav_dom_sf"/>
</dbReference>
<dbReference type="NCBIfam" id="TIGR01011">
    <property type="entry name" value="rpsB_bact"/>
    <property type="match status" value="1"/>
</dbReference>
<dbReference type="PANTHER" id="PTHR12534">
    <property type="entry name" value="30S RIBOSOMAL PROTEIN S2 PROKARYOTIC AND ORGANELLAR"/>
    <property type="match status" value="1"/>
</dbReference>
<dbReference type="PANTHER" id="PTHR12534:SF0">
    <property type="entry name" value="SMALL RIBOSOMAL SUBUNIT PROTEIN US2M"/>
    <property type="match status" value="1"/>
</dbReference>
<dbReference type="Pfam" id="PF00318">
    <property type="entry name" value="Ribosomal_S2"/>
    <property type="match status" value="1"/>
</dbReference>
<dbReference type="PRINTS" id="PR00395">
    <property type="entry name" value="RIBOSOMALS2"/>
</dbReference>
<dbReference type="SUPFAM" id="SSF52313">
    <property type="entry name" value="Ribosomal protein S2"/>
    <property type="match status" value="1"/>
</dbReference>
<dbReference type="PROSITE" id="PS00962">
    <property type="entry name" value="RIBOSOMAL_S2_1"/>
    <property type="match status" value="1"/>
</dbReference>
<dbReference type="PROSITE" id="PS00963">
    <property type="entry name" value="RIBOSOMAL_S2_2"/>
    <property type="match status" value="1"/>
</dbReference>
<feature type="chain" id="PRO_0000352095" description="Small ribosomal subunit protein uS2c">
    <location>
        <begin position="1"/>
        <end position="236"/>
    </location>
</feature>
<geneLocation type="chloroplast"/>
<accession>A6MM25</accession>
<comment type="subcellular location">
    <subcellularLocation>
        <location>Plastid</location>
        <location>Chloroplast</location>
    </subcellularLocation>
</comment>
<comment type="similarity">
    <text evidence="1">Belongs to the universal ribosomal protein uS2 family.</text>
</comment>
<sequence length="236" mass="26835">MTRRYWNINLEEMMEAGVHFGHGTRKWNPRMAPYISAKRKGIHITNLTRTARFLSEACDLLFDAASRGKQFLIVGTKNKAADLVASAAIRARCHYVNKKWLGGMSTNWSTTETRLHKFRDLRAEQKTARLARLPKRDAAMLKRQLSHLQTYLGGIKYMTRLPDIVIIVDQQEEYTAIRECVTLGIPMICLIDTNCDPDLADISIPANDDAIASIRLILNKLVSAICEGRSSYIRNR</sequence>
<protein>
    <recommendedName>
        <fullName evidence="1">Small ribosomal subunit protein uS2c</fullName>
    </recommendedName>
    <alternativeName>
        <fullName>30S ribosomal protein S2, chloroplastic</fullName>
    </alternativeName>
</protein>
<reference key="1">
    <citation type="journal article" date="2007" name="Mol. Phylogenet. Evol.">
        <title>Phylogenetic and evolutionary implications of complete chloroplast genome sequences of four early-diverging angiosperms: Buxus (Buxaceae), Chloranthus (Chloranthaceae), Dioscorea (Dioscoreaceae), and Illicium (Schisandraceae).</title>
        <authorList>
            <person name="Hansen D.R."/>
            <person name="Dastidar S.G."/>
            <person name="Cai Z."/>
            <person name="Penaflor C."/>
            <person name="Kuehl J.V."/>
            <person name="Boore J.L."/>
            <person name="Jansen R.K."/>
        </authorList>
    </citation>
    <scope>NUCLEOTIDE SEQUENCE [LARGE SCALE GENOMIC DNA]</scope>
</reference>
<organism>
    <name type="scientific">Buxus microphylla</name>
    <name type="common">Littleleaf boxwood</name>
    <name type="synonym">Japanese boxwood</name>
    <dbReference type="NCBI Taxonomy" id="153571"/>
    <lineage>
        <taxon>Eukaryota</taxon>
        <taxon>Viridiplantae</taxon>
        <taxon>Streptophyta</taxon>
        <taxon>Embryophyta</taxon>
        <taxon>Tracheophyta</taxon>
        <taxon>Spermatophyta</taxon>
        <taxon>Magnoliopsida</taxon>
        <taxon>Buxales</taxon>
        <taxon>Buxaceae</taxon>
        <taxon>Buxus</taxon>
    </lineage>
</organism>
<keyword id="KW-0150">Chloroplast</keyword>
<keyword id="KW-0934">Plastid</keyword>
<keyword id="KW-0687">Ribonucleoprotein</keyword>
<keyword id="KW-0689">Ribosomal protein</keyword>
<evidence type="ECO:0000305" key="1"/>